<gene>
    <name evidence="1" type="primary">rnc</name>
    <name type="ordered locus">YpsIP31758_1136</name>
</gene>
<evidence type="ECO:0000255" key="1">
    <source>
        <dbReference type="HAMAP-Rule" id="MF_00104"/>
    </source>
</evidence>
<comment type="function">
    <text evidence="1">Digests double-stranded RNA. Involved in the processing of primary rRNA transcript to yield the immediate precursors to the large and small rRNAs (23S and 16S). Processes some mRNAs, and tRNAs when they are encoded in the rRNA operon. Processes pre-crRNA and tracrRNA of type II CRISPR loci if present in the organism.</text>
</comment>
<comment type="catalytic activity">
    <reaction evidence="1">
        <text>Endonucleolytic cleavage to 5'-phosphomonoester.</text>
        <dbReference type="EC" id="3.1.26.3"/>
    </reaction>
</comment>
<comment type="cofactor">
    <cofactor evidence="1">
        <name>Mg(2+)</name>
        <dbReference type="ChEBI" id="CHEBI:18420"/>
    </cofactor>
</comment>
<comment type="subunit">
    <text evidence="1">Homodimer.</text>
</comment>
<comment type="subcellular location">
    <subcellularLocation>
        <location evidence="1">Cytoplasm</location>
    </subcellularLocation>
</comment>
<comment type="similarity">
    <text evidence="1">Belongs to the ribonuclease III family.</text>
</comment>
<keyword id="KW-0963">Cytoplasm</keyword>
<keyword id="KW-0255">Endonuclease</keyword>
<keyword id="KW-0378">Hydrolase</keyword>
<keyword id="KW-0460">Magnesium</keyword>
<keyword id="KW-0479">Metal-binding</keyword>
<keyword id="KW-0507">mRNA processing</keyword>
<keyword id="KW-0540">Nuclease</keyword>
<keyword id="KW-0694">RNA-binding</keyword>
<keyword id="KW-0698">rRNA processing</keyword>
<keyword id="KW-0699">rRNA-binding</keyword>
<keyword id="KW-0819">tRNA processing</keyword>
<dbReference type="EC" id="3.1.26.3" evidence="1"/>
<dbReference type="EMBL" id="CP000720">
    <property type="protein sequence ID" value="ABS48339.1"/>
    <property type="molecule type" value="Genomic_DNA"/>
</dbReference>
<dbReference type="RefSeq" id="WP_002209679.1">
    <property type="nucleotide sequence ID" value="NC_009708.1"/>
</dbReference>
<dbReference type="SMR" id="A7FFT9"/>
<dbReference type="GeneID" id="57975973"/>
<dbReference type="KEGG" id="ypi:YpsIP31758_1136"/>
<dbReference type="HOGENOM" id="CLU_000907_1_1_6"/>
<dbReference type="Proteomes" id="UP000002412">
    <property type="component" value="Chromosome"/>
</dbReference>
<dbReference type="GO" id="GO:0005737">
    <property type="term" value="C:cytoplasm"/>
    <property type="evidence" value="ECO:0007669"/>
    <property type="project" value="UniProtKB-SubCell"/>
</dbReference>
<dbReference type="GO" id="GO:0003725">
    <property type="term" value="F:double-stranded RNA binding"/>
    <property type="evidence" value="ECO:0007669"/>
    <property type="project" value="TreeGrafter"/>
</dbReference>
<dbReference type="GO" id="GO:0046872">
    <property type="term" value="F:metal ion binding"/>
    <property type="evidence" value="ECO:0007669"/>
    <property type="project" value="UniProtKB-KW"/>
</dbReference>
<dbReference type="GO" id="GO:0004525">
    <property type="term" value="F:ribonuclease III activity"/>
    <property type="evidence" value="ECO:0007669"/>
    <property type="project" value="UniProtKB-UniRule"/>
</dbReference>
<dbReference type="GO" id="GO:0019843">
    <property type="term" value="F:rRNA binding"/>
    <property type="evidence" value="ECO:0007669"/>
    <property type="project" value="UniProtKB-KW"/>
</dbReference>
<dbReference type="GO" id="GO:0006397">
    <property type="term" value="P:mRNA processing"/>
    <property type="evidence" value="ECO:0007669"/>
    <property type="project" value="UniProtKB-UniRule"/>
</dbReference>
<dbReference type="GO" id="GO:0010468">
    <property type="term" value="P:regulation of gene expression"/>
    <property type="evidence" value="ECO:0007669"/>
    <property type="project" value="TreeGrafter"/>
</dbReference>
<dbReference type="GO" id="GO:0006364">
    <property type="term" value="P:rRNA processing"/>
    <property type="evidence" value="ECO:0007669"/>
    <property type="project" value="UniProtKB-UniRule"/>
</dbReference>
<dbReference type="GO" id="GO:0008033">
    <property type="term" value="P:tRNA processing"/>
    <property type="evidence" value="ECO:0007669"/>
    <property type="project" value="UniProtKB-KW"/>
</dbReference>
<dbReference type="CDD" id="cd10845">
    <property type="entry name" value="DSRM_RNAse_III_family"/>
    <property type="match status" value="1"/>
</dbReference>
<dbReference type="CDD" id="cd00593">
    <property type="entry name" value="RIBOc"/>
    <property type="match status" value="1"/>
</dbReference>
<dbReference type="FunFam" id="1.10.1520.10:FF:000001">
    <property type="entry name" value="Ribonuclease 3"/>
    <property type="match status" value="1"/>
</dbReference>
<dbReference type="FunFam" id="3.30.160.20:FF:000003">
    <property type="entry name" value="Ribonuclease 3"/>
    <property type="match status" value="1"/>
</dbReference>
<dbReference type="Gene3D" id="3.30.160.20">
    <property type="match status" value="1"/>
</dbReference>
<dbReference type="Gene3D" id="1.10.1520.10">
    <property type="entry name" value="Ribonuclease III domain"/>
    <property type="match status" value="1"/>
</dbReference>
<dbReference type="HAMAP" id="MF_00104">
    <property type="entry name" value="RNase_III"/>
    <property type="match status" value="1"/>
</dbReference>
<dbReference type="InterPro" id="IPR014720">
    <property type="entry name" value="dsRBD_dom"/>
</dbReference>
<dbReference type="InterPro" id="IPR011907">
    <property type="entry name" value="RNase_III"/>
</dbReference>
<dbReference type="InterPro" id="IPR000999">
    <property type="entry name" value="RNase_III_dom"/>
</dbReference>
<dbReference type="InterPro" id="IPR036389">
    <property type="entry name" value="RNase_III_sf"/>
</dbReference>
<dbReference type="NCBIfam" id="TIGR02191">
    <property type="entry name" value="RNaseIII"/>
    <property type="match status" value="1"/>
</dbReference>
<dbReference type="PANTHER" id="PTHR11207:SF0">
    <property type="entry name" value="RIBONUCLEASE 3"/>
    <property type="match status" value="1"/>
</dbReference>
<dbReference type="PANTHER" id="PTHR11207">
    <property type="entry name" value="RIBONUCLEASE III"/>
    <property type="match status" value="1"/>
</dbReference>
<dbReference type="Pfam" id="PF00035">
    <property type="entry name" value="dsrm"/>
    <property type="match status" value="1"/>
</dbReference>
<dbReference type="Pfam" id="PF14622">
    <property type="entry name" value="Ribonucleas_3_3"/>
    <property type="match status" value="1"/>
</dbReference>
<dbReference type="SMART" id="SM00358">
    <property type="entry name" value="DSRM"/>
    <property type="match status" value="1"/>
</dbReference>
<dbReference type="SMART" id="SM00535">
    <property type="entry name" value="RIBOc"/>
    <property type="match status" value="1"/>
</dbReference>
<dbReference type="SUPFAM" id="SSF54768">
    <property type="entry name" value="dsRNA-binding domain-like"/>
    <property type="match status" value="1"/>
</dbReference>
<dbReference type="SUPFAM" id="SSF69065">
    <property type="entry name" value="RNase III domain-like"/>
    <property type="match status" value="1"/>
</dbReference>
<dbReference type="PROSITE" id="PS50137">
    <property type="entry name" value="DS_RBD"/>
    <property type="match status" value="1"/>
</dbReference>
<dbReference type="PROSITE" id="PS00517">
    <property type="entry name" value="RNASE_3_1"/>
    <property type="match status" value="1"/>
</dbReference>
<dbReference type="PROSITE" id="PS50142">
    <property type="entry name" value="RNASE_3_2"/>
    <property type="match status" value="1"/>
</dbReference>
<name>RNC_YERP3</name>
<accession>A7FFT9</accession>
<feature type="chain" id="PRO_1000075851" description="Ribonuclease 3">
    <location>
        <begin position="1"/>
        <end position="226"/>
    </location>
</feature>
<feature type="domain" description="RNase III" evidence="1">
    <location>
        <begin position="6"/>
        <end position="128"/>
    </location>
</feature>
<feature type="domain" description="DRBM" evidence="1">
    <location>
        <begin position="155"/>
        <end position="225"/>
    </location>
</feature>
<feature type="active site" evidence="1">
    <location>
        <position position="45"/>
    </location>
</feature>
<feature type="active site" evidence="1">
    <location>
        <position position="117"/>
    </location>
</feature>
<feature type="binding site" evidence="1">
    <location>
        <position position="41"/>
    </location>
    <ligand>
        <name>Mg(2+)</name>
        <dbReference type="ChEBI" id="CHEBI:18420"/>
    </ligand>
</feature>
<feature type="binding site" evidence="1">
    <location>
        <position position="114"/>
    </location>
    <ligand>
        <name>Mg(2+)</name>
        <dbReference type="ChEBI" id="CHEBI:18420"/>
    </ligand>
</feature>
<feature type="binding site" evidence="1">
    <location>
        <position position="117"/>
    </location>
    <ligand>
        <name>Mg(2+)</name>
        <dbReference type="ChEBI" id="CHEBI:18420"/>
    </ligand>
</feature>
<proteinExistence type="inferred from homology"/>
<protein>
    <recommendedName>
        <fullName evidence="1">Ribonuclease 3</fullName>
        <ecNumber evidence="1">3.1.26.3</ecNumber>
    </recommendedName>
    <alternativeName>
        <fullName evidence="1">Ribonuclease III</fullName>
        <shortName evidence="1">RNase III</shortName>
    </alternativeName>
</protein>
<organism>
    <name type="scientific">Yersinia pseudotuberculosis serotype O:1b (strain IP 31758)</name>
    <dbReference type="NCBI Taxonomy" id="349747"/>
    <lineage>
        <taxon>Bacteria</taxon>
        <taxon>Pseudomonadati</taxon>
        <taxon>Pseudomonadota</taxon>
        <taxon>Gammaproteobacteria</taxon>
        <taxon>Enterobacterales</taxon>
        <taxon>Yersiniaceae</taxon>
        <taxon>Yersinia</taxon>
    </lineage>
</organism>
<reference key="1">
    <citation type="journal article" date="2007" name="PLoS Genet.">
        <title>The complete genome sequence of Yersinia pseudotuberculosis IP31758, the causative agent of Far East scarlet-like fever.</title>
        <authorList>
            <person name="Eppinger M."/>
            <person name="Rosovitz M.J."/>
            <person name="Fricke W.F."/>
            <person name="Rasko D.A."/>
            <person name="Kokorina G."/>
            <person name="Fayolle C."/>
            <person name="Lindler L.E."/>
            <person name="Carniel E."/>
            <person name="Ravel J."/>
        </authorList>
    </citation>
    <scope>NUCLEOTIDE SEQUENCE [LARGE SCALE GENOMIC DNA]</scope>
    <source>
        <strain>IP 31758</strain>
    </source>
</reference>
<sequence>MNPIVINRLQRKLGYTFQQQELLLQALTHRSASSKHNERLEFLGDSILSFVIANELYRRFPRVDEGDMSRMRATLVRGNTLAEMAREFDLGECLRLGPGELKSGGFRRESILADTVEALIGGVFLDSDIHTIERLILEWYHSRLEEISPGDKQKDPKTRLQEYLQGRHLPLPSYLVVQVRGEAHDQEFTIHCQVSGLNEPVIGTGSSRRKAEQAAAEQALKQLELE</sequence>